<accession>F4KDD7</accession>
<keyword id="KW-0963">Cytoplasm</keyword>
<keyword id="KW-0539">Nucleus</keyword>
<keyword id="KW-1185">Reference proteome</keyword>
<dbReference type="EMBL" id="AB010074">
    <property type="status" value="NOT_ANNOTATED_CDS"/>
    <property type="molecule type" value="Genomic_DNA"/>
</dbReference>
<dbReference type="EMBL" id="CP002688">
    <property type="protein sequence ID" value="AED96127.1"/>
    <property type="molecule type" value="Genomic_DNA"/>
</dbReference>
<dbReference type="RefSeq" id="NP_680423.1">
    <property type="nucleotide sequence ID" value="NM_148118.1"/>
</dbReference>
<dbReference type="SMR" id="F4KDD7"/>
<dbReference type="FunCoup" id="F4KDD7">
    <property type="interactions" value="3887"/>
</dbReference>
<dbReference type="STRING" id="3702.F4KDD7"/>
<dbReference type="PaxDb" id="3702-AT5G51795.1"/>
<dbReference type="EnsemblPlants" id="AT5G51795.1">
    <property type="protein sequence ID" value="AT5G51795.1"/>
    <property type="gene ID" value="AT5G51795"/>
</dbReference>
<dbReference type="GeneID" id="835254"/>
<dbReference type="Gramene" id="AT5G51795.1">
    <property type="protein sequence ID" value="AT5G51795.1"/>
    <property type="gene ID" value="AT5G51795"/>
</dbReference>
<dbReference type="KEGG" id="ath:AT5G51795"/>
<dbReference type="Araport" id="AT5G51795"/>
<dbReference type="TAIR" id="AT5G51795"/>
<dbReference type="eggNOG" id="KOG2837">
    <property type="taxonomic scope" value="Eukaryota"/>
</dbReference>
<dbReference type="HOGENOM" id="CLU_030065_1_0_1"/>
<dbReference type="InParanoid" id="F4KDD7"/>
<dbReference type="OMA" id="DRRHVHM"/>
<dbReference type="PhylomeDB" id="F4KDD7"/>
<dbReference type="PRO" id="PR:F4KDD7"/>
<dbReference type="Proteomes" id="UP000006548">
    <property type="component" value="Chromosome 5"/>
</dbReference>
<dbReference type="ExpressionAtlas" id="F4KDD7">
    <property type="expression patterns" value="baseline and differential"/>
</dbReference>
<dbReference type="GO" id="GO:0005737">
    <property type="term" value="C:cytoplasm"/>
    <property type="evidence" value="ECO:0000314"/>
    <property type="project" value="UniProtKB"/>
</dbReference>
<dbReference type="GO" id="GO:0005634">
    <property type="term" value="C:nucleus"/>
    <property type="evidence" value="ECO:0000314"/>
    <property type="project" value="UniProtKB"/>
</dbReference>
<dbReference type="CDD" id="cd13155">
    <property type="entry name" value="KOW_KIN17"/>
    <property type="match status" value="1"/>
</dbReference>
<dbReference type="FunFam" id="2.30.30.30:FF:000021">
    <property type="entry name" value="DNA/RNA-binding protein KIN17, putative"/>
    <property type="match status" value="1"/>
</dbReference>
<dbReference type="FunFam" id="1.10.10.2030:FF:000003">
    <property type="entry name" value="Rts2p"/>
    <property type="match status" value="1"/>
</dbReference>
<dbReference type="Gene3D" id="2.30.30.140">
    <property type="match status" value="1"/>
</dbReference>
<dbReference type="Gene3D" id="2.30.30.30">
    <property type="match status" value="1"/>
</dbReference>
<dbReference type="Gene3D" id="1.10.10.2030">
    <property type="entry name" value="DNA/RNA-binding protein Kin17, conserved domain"/>
    <property type="match status" value="1"/>
</dbReference>
<dbReference type="InterPro" id="IPR056767">
    <property type="entry name" value="C2H2-Znf_KIN17"/>
</dbReference>
<dbReference type="InterPro" id="IPR019447">
    <property type="entry name" value="DNA/RNA-bd_Kin17_WH-like_dom"/>
</dbReference>
<dbReference type="InterPro" id="IPR037321">
    <property type="entry name" value="KIN17-like"/>
</dbReference>
<dbReference type="InterPro" id="IPR038254">
    <property type="entry name" value="KIN17_WH-like_sf"/>
</dbReference>
<dbReference type="InterPro" id="IPR041330">
    <property type="entry name" value="KN17_SH3"/>
</dbReference>
<dbReference type="InterPro" id="IPR041995">
    <property type="entry name" value="KOW_KIN17"/>
</dbReference>
<dbReference type="InterPro" id="IPR014722">
    <property type="entry name" value="Rib_uL2_dom2"/>
</dbReference>
<dbReference type="PANTHER" id="PTHR12805:SF0">
    <property type="entry name" value="DNA_RNA-BINDING PROTEIN KIN17"/>
    <property type="match status" value="1"/>
</dbReference>
<dbReference type="PANTHER" id="PTHR12805">
    <property type="entry name" value="KIN17 KIN, ANTIGENIC DETERMINANT OF RECA PROTEIN HOMOLOG"/>
    <property type="match status" value="1"/>
</dbReference>
<dbReference type="Pfam" id="PF25095">
    <property type="entry name" value="C2H2-zf_KIN17"/>
    <property type="match status" value="1"/>
</dbReference>
<dbReference type="Pfam" id="PF18131">
    <property type="entry name" value="KN17_SH3"/>
    <property type="match status" value="1"/>
</dbReference>
<dbReference type="Pfam" id="PF25092">
    <property type="entry name" value="SH3_KIN17_C"/>
    <property type="match status" value="1"/>
</dbReference>
<dbReference type="Pfam" id="PF10357">
    <property type="entry name" value="WH_KIN17"/>
    <property type="match status" value="1"/>
</dbReference>
<dbReference type="SMART" id="SM01253">
    <property type="entry name" value="Kin17_mid"/>
    <property type="match status" value="1"/>
</dbReference>
<proteinExistence type="inferred from homology"/>
<comment type="function">
    <text evidence="1">May act as repressor of root growth during copper excess and of hypocotyl growth in the dark.</text>
</comment>
<comment type="subcellular location">
    <subcellularLocation>
        <location evidence="1">Cytoplasm</location>
    </subcellularLocation>
    <subcellularLocation>
        <location evidence="1">Nucleus</location>
    </subcellularLocation>
</comment>
<comment type="similarity">
    <text evidence="3">Belongs to the KIN17 family.</text>
</comment>
<organism>
    <name type="scientific">Arabidopsis thaliana</name>
    <name type="common">Mouse-ear cress</name>
    <dbReference type="NCBI Taxonomy" id="3702"/>
    <lineage>
        <taxon>Eukaryota</taxon>
        <taxon>Viridiplantae</taxon>
        <taxon>Streptophyta</taxon>
        <taxon>Embryophyta</taxon>
        <taxon>Tracheophyta</taxon>
        <taxon>Spermatophyta</taxon>
        <taxon>Magnoliopsida</taxon>
        <taxon>eudicotyledons</taxon>
        <taxon>Gunneridae</taxon>
        <taxon>Pentapetalae</taxon>
        <taxon>rosids</taxon>
        <taxon>malvids</taxon>
        <taxon>Brassicales</taxon>
        <taxon>Brassicaceae</taxon>
        <taxon>Camelineae</taxon>
        <taxon>Arabidopsis</taxon>
    </lineage>
</organism>
<evidence type="ECO:0000269" key="1">
    <source>
    </source>
</evidence>
<evidence type="ECO:0000303" key="2">
    <source>
    </source>
</evidence>
<evidence type="ECO:0000305" key="3"/>
<evidence type="ECO:0000305" key="4">
    <source>
    </source>
</evidence>
<evidence type="ECO:0000312" key="5">
    <source>
        <dbReference type="Araport" id="AT5G51795"/>
    </source>
</evidence>
<feature type="chain" id="PRO_0000438805" description="KIN17-like protein KLP">
    <location>
        <begin position="1"/>
        <end position="347"/>
    </location>
</feature>
<feature type="short sequence motif" description="Nuclear localization signal (NLS)" evidence="4">
    <location>
        <begin position="222"/>
        <end position="225"/>
    </location>
</feature>
<gene>
    <name evidence="2" type="primary">KLP</name>
    <name evidence="5" type="ordered locus">At5g51795</name>
</gene>
<reference key="1">
    <citation type="journal article" date="1998" name="DNA Res.">
        <title>Structural analysis of Arabidopsis thaliana chromosome 5. IV. Sequence features of the regions of 1,456,315 bp covered by nineteen physically assigned P1 and TAC clones.</title>
        <authorList>
            <person name="Sato S."/>
            <person name="Kaneko T."/>
            <person name="Kotani H."/>
            <person name="Nakamura Y."/>
            <person name="Asamizu E."/>
            <person name="Miyajima N."/>
            <person name="Tabata S."/>
        </authorList>
    </citation>
    <scope>NUCLEOTIDE SEQUENCE [LARGE SCALE GENOMIC DNA]</scope>
    <source>
        <strain>cv. Columbia</strain>
    </source>
</reference>
<reference key="2">
    <citation type="journal article" date="2017" name="Plant J.">
        <title>Araport11: a complete reannotation of the Arabidopsis thaliana reference genome.</title>
        <authorList>
            <person name="Cheng C.Y."/>
            <person name="Krishnakumar V."/>
            <person name="Chan A.P."/>
            <person name="Thibaud-Nissen F."/>
            <person name="Schobel S."/>
            <person name="Town C.D."/>
        </authorList>
    </citation>
    <scope>GENOME REANNOTATION</scope>
    <source>
        <strain>cv. Columbia</strain>
    </source>
</reference>
<reference key="3">
    <citation type="journal article" date="2014" name="Plant Signal. Behav.">
        <title>The Arabidopsis KIN17 and its homolog KLP mediate different aspects of plant growth and development.</title>
        <authorList>
            <person name="Garcia-Molina A."/>
            <person name="Xing S."/>
            <person name="Huijser P."/>
        </authorList>
    </citation>
    <scope>FUNCTION</scope>
    <scope>SUBCELLULAR LOCATION</scope>
</reference>
<protein>
    <recommendedName>
        <fullName evidence="3">KIN17-like protein KLP</fullName>
    </recommendedName>
</protein>
<sequence length="347" mass="40102">MFVMSSSSIPNGIFIIDGQERYVNPEGDVESNKSERTSKASMVFQMCEKQCRDENGFKCHCMSESHQRQMQVLGQNPTRVVNGYSQEFEQTFLDLMRRSHRFSRVAATVVYNEYINDRLHVHMNSTKWATLTEFIKYLGKTAEEEKQEREIQKQIERASAGCEGKDVVVDDDDNDDDEKKKDEDFRLKKVGFALGLGVKERGESSKLVFGDEENDKVERGDKRKRSALDELMKEEEKKKERMNRKDYWLFEGIIVKGVVKRVIDKYVGEIEMLESKHVLRVDQVELKTVLPQIGGMVKIVNGAYRGSNTRLLDLDTEKFCAKVQIEKGVYDGRVIKSIEYEDICKLA</sequence>
<name>KLP_ARATH</name>